<name>LELP1_HUMAN</name>
<feature type="chain" id="PRO_0000271603" description="Late cornified envelope-like proline-rich protein 1">
    <location>
        <begin position="1"/>
        <end position="98"/>
    </location>
</feature>
<feature type="region of interest" description="Disordered" evidence="1">
    <location>
        <begin position="1"/>
        <end position="26"/>
    </location>
</feature>
<dbReference type="EMBL" id="AL161636">
    <property type="status" value="NOT_ANNOTATED_CDS"/>
    <property type="molecule type" value="Genomic_DNA"/>
</dbReference>
<dbReference type="EMBL" id="BC087854">
    <property type="protein sequence ID" value="AAH87854.1"/>
    <property type="molecule type" value="mRNA"/>
</dbReference>
<dbReference type="EMBL" id="BC130507">
    <property type="protein sequence ID" value="AAI30508.1"/>
    <property type="molecule type" value="mRNA"/>
</dbReference>
<dbReference type="EMBL" id="BC130511">
    <property type="protein sequence ID" value="AAI30512.1"/>
    <property type="molecule type" value="mRNA"/>
</dbReference>
<dbReference type="CCDS" id="CCDS30869.1"/>
<dbReference type="RefSeq" id="NP_001010857.1">
    <property type="nucleotide sequence ID" value="NM_001010857.3"/>
</dbReference>
<dbReference type="SMR" id="Q5T871"/>
<dbReference type="BioGRID" id="127185">
    <property type="interactions" value="16"/>
</dbReference>
<dbReference type="FunCoup" id="Q5T871">
    <property type="interactions" value="9"/>
</dbReference>
<dbReference type="IntAct" id="Q5T871">
    <property type="interactions" value="15"/>
</dbReference>
<dbReference type="STRING" id="9606.ENSP00000357736"/>
<dbReference type="BioMuta" id="LELP1"/>
<dbReference type="DMDM" id="74745484"/>
<dbReference type="MassIVE" id="Q5T871"/>
<dbReference type="PaxDb" id="9606-ENSP00000357736"/>
<dbReference type="PeptideAtlas" id="Q5T871"/>
<dbReference type="ProteomicsDB" id="64713"/>
<dbReference type="Antibodypedia" id="50369">
    <property type="antibodies" value="98 antibodies from 13 providers"/>
</dbReference>
<dbReference type="DNASU" id="149018"/>
<dbReference type="Ensembl" id="ENST00000368747.2">
    <property type="protein sequence ID" value="ENSP00000357736.1"/>
    <property type="gene ID" value="ENSG00000203784.3"/>
</dbReference>
<dbReference type="GeneID" id="149018"/>
<dbReference type="KEGG" id="hsa:149018"/>
<dbReference type="MANE-Select" id="ENST00000368747.2">
    <property type="protein sequence ID" value="ENSP00000357736.1"/>
    <property type="RefSeq nucleotide sequence ID" value="NM_001010857.3"/>
    <property type="RefSeq protein sequence ID" value="NP_001010857.1"/>
</dbReference>
<dbReference type="UCSC" id="uc001fbl.5">
    <property type="organism name" value="human"/>
</dbReference>
<dbReference type="AGR" id="HGNC:32046"/>
<dbReference type="CTD" id="149018"/>
<dbReference type="DisGeNET" id="149018"/>
<dbReference type="GeneCards" id="LELP1"/>
<dbReference type="HGNC" id="HGNC:32046">
    <property type="gene designation" value="LELP1"/>
</dbReference>
<dbReference type="HPA" id="ENSG00000203784">
    <property type="expression patterns" value="Tissue enriched (testis)"/>
</dbReference>
<dbReference type="MIM" id="611042">
    <property type="type" value="gene"/>
</dbReference>
<dbReference type="neXtProt" id="NX_Q5T871"/>
<dbReference type="OpenTargets" id="ENSG00000203784"/>
<dbReference type="PharmGKB" id="PA142671557"/>
<dbReference type="VEuPathDB" id="HostDB:ENSG00000203784"/>
<dbReference type="eggNOG" id="ENOG502RTZC">
    <property type="taxonomic scope" value="Eukaryota"/>
</dbReference>
<dbReference type="GeneTree" id="ENSGT00730000111592"/>
<dbReference type="HOGENOM" id="CLU_2269932_0_0_1"/>
<dbReference type="InParanoid" id="Q5T871"/>
<dbReference type="OMA" id="KCESKCQ"/>
<dbReference type="OrthoDB" id="9837821at2759"/>
<dbReference type="PAN-GO" id="Q5T871">
    <property type="GO annotations" value="0 GO annotations based on evolutionary models"/>
</dbReference>
<dbReference type="PhylomeDB" id="Q5T871"/>
<dbReference type="PathwayCommons" id="Q5T871"/>
<dbReference type="Reactome" id="R-HSA-6809371">
    <property type="pathway name" value="Formation of the cornified envelope"/>
</dbReference>
<dbReference type="SignaLink" id="Q5T871"/>
<dbReference type="BioGRID-ORCS" id="149018">
    <property type="hits" value="12 hits in 1134 CRISPR screens"/>
</dbReference>
<dbReference type="GenomeRNAi" id="149018"/>
<dbReference type="Pharos" id="Q5T871">
    <property type="development level" value="Tbio"/>
</dbReference>
<dbReference type="PRO" id="PR:Q5T871"/>
<dbReference type="Proteomes" id="UP000005640">
    <property type="component" value="Chromosome 1"/>
</dbReference>
<dbReference type="RNAct" id="Q5T871">
    <property type="molecule type" value="protein"/>
</dbReference>
<dbReference type="Bgee" id="ENSG00000203784">
    <property type="expression patterns" value="Expressed in sperm and 108 other cell types or tissues"/>
</dbReference>
<dbReference type="InterPro" id="IPR026076">
    <property type="entry name" value="Lelp1"/>
</dbReference>
<dbReference type="Pfam" id="PF15042">
    <property type="entry name" value="LELP1"/>
    <property type="match status" value="1"/>
</dbReference>
<dbReference type="PRINTS" id="PR00021">
    <property type="entry name" value="PRORICH"/>
</dbReference>
<accession>Q5T871</accession>
<accession>A1L4E1</accession>
<protein>
    <recommendedName>
        <fullName>Late cornified envelope-like proline-rich protein 1</fullName>
    </recommendedName>
    <alternativeName>
        <fullName>Novel small proline-rich protein</fullName>
    </alternativeName>
</protein>
<evidence type="ECO:0000256" key="1">
    <source>
        <dbReference type="SAM" id="MobiDB-lite"/>
    </source>
</evidence>
<evidence type="ECO:0000305" key="2"/>
<sequence>MSSDDKSKSNDPKTEPKNCDPKCEQKCESKCQPSCLKKLLQRCFEKCPWEKCPAPPKCLPCPSQSPSSCPPQPCTKPCPPKCPSSCPHACPPPCPPPE</sequence>
<reference key="1">
    <citation type="journal article" date="2006" name="Nature">
        <title>The DNA sequence and biological annotation of human chromosome 1.</title>
        <authorList>
            <person name="Gregory S.G."/>
            <person name="Barlow K.F."/>
            <person name="McLay K.E."/>
            <person name="Kaul R."/>
            <person name="Swarbreck D."/>
            <person name="Dunham A."/>
            <person name="Scott C.E."/>
            <person name="Howe K.L."/>
            <person name="Woodfine K."/>
            <person name="Spencer C.C.A."/>
            <person name="Jones M.C."/>
            <person name="Gillson C."/>
            <person name="Searle S."/>
            <person name="Zhou Y."/>
            <person name="Kokocinski F."/>
            <person name="McDonald L."/>
            <person name="Evans R."/>
            <person name="Phillips K."/>
            <person name="Atkinson A."/>
            <person name="Cooper R."/>
            <person name="Jones C."/>
            <person name="Hall R.E."/>
            <person name="Andrews T.D."/>
            <person name="Lloyd C."/>
            <person name="Ainscough R."/>
            <person name="Almeida J.P."/>
            <person name="Ambrose K.D."/>
            <person name="Anderson F."/>
            <person name="Andrew R.W."/>
            <person name="Ashwell R.I.S."/>
            <person name="Aubin K."/>
            <person name="Babbage A.K."/>
            <person name="Bagguley C.L."/>
            <person name="Bailey J."/>
            <person name="Beasley H."/>
            <person name="Bethel G."/>
            <person name="Bird C.P."/>
            <person name="Bray-Allen S."/>
            <person name="Brown J.Y."/>
            <person name="Brown A.J."/>
            <person name="Buckley D."/>
            <person name="Burton J."/>
            <person name="Bye J."/>
            <person name="Carder C."/>
            <person name="Chapman J.C."/>
            <person name="Clark S.Y."/>
            <person name="Clarke G."/>
            <person name="Clee C."/>
            <person name="Cobley V."/>
            <person name="Collier R.E."/>
            <person name="Corby N."/>
            <person name="Coville G.J."/>
            <person name="Davies J."/>
            <person name="Deadman R."/>
            <person name="Dunn M."/>
            <person name="Earthrowl M."/>
            <person name="Ellington A.G."/>
            <person name="Errington H."/>
            <person name="Frankish A."/>
            <person name="Frankland J."/>
            <person name="French L."/>
            <person name="Garner P."/>
            <person name="Garnett J."/>
            <person name="Gay L."/>
            <person name="Ghori M.R.J."/>
            <person name="Gibson R."/>
            <person name="Gilby L.M."/>
            <person name="Gillett W."/>
            <person name="Glithero R.J."/>
            <person name="Grafham D.V."/>
            <person name="Griffiths C."/>
            <person name="Griffiths-Jones S."/>
            <person name="Grocock R."/>
            <person name="Hammond S."/>
            <person name="Harrison E.S.I."/>
            <person name="Hart E."/>
            <person name="Haugen E."/>
            <person name="Heath P.D."/>
            <person name="Holmes S."/>
            <person name="Holt K."/>
            <person name="Howden P.J."/>
            <person name="Hunt A.R."/>
            <person name="Hunt S.E."/>
            <person name="Hunter G."/>
            <person name="Isherwood J."/>
            <person name="James R."/>
            <person name="Johnson C."/>
            <person name="Johnson D."/>
            <person name="Joy A."/>
            <person name="Kay M."/>
            <person name="Kershaw J.K."/>
            <person name="Kibukawa M."/>
            <person name="Kimberley A.M."/>
            <person name="King A."/>
            <person name="Knights A.J."/>
            <person name="Lad H."/>
            <person name="Laird G."/>
            <person name="Lawlor S."/>
            <person name="Leongamornlert D.A."/>
            <person name="Lloyd D.M."/>
            <person name="Loveland J."/>
            <person name="Lovell J."/>
            <person name="Lush M.J."/>
            <person name="Lyne R."/>
            <person name="Martin S."/>
            <person name="Mashreghi-Mohammadi M."/>
            <person name="Matthews L."/>
            <person name="Matthews N.S.W."/>
            <person name="McLaren S."/>
            <person name="Milne S."/>
            <person name="Mistry S."/>
            <person name="Moore M.J.F."/>
            <person name="Nickerson T."/>
            <person name="O'Dell C.N."/>
            <person name="Oliver K."/>
            <person name="Palmeiri A."/>
            <person name="Palmer S.A."/>
            <person name="Parker A."/>
            <person name="Patel D."/>
            <person name="Pearce A.V."/>
            <person name="Peck A.I."/>
            <person name="Pelan S."/>
            <person name="Phelps K."/>
            <person name="Phillimore B.J."/>
            <person name="Plumb R."/>
            <person name="Rajan J."/>
            <person name="Raymond C."/>
            <person name="Rouse G."/>
            <person name="Saenphimmachak C."/>
            <person name="Sehra H.K."/>
            <person name="Sheridan E."/>
            <person name="Shownkeen R."/>
            <person name="Sims S."/>
            <person name="Skuce C.D."/>
            <person name="Smith M."/>
            <person name="Steward C."/>
            <person name="Subramanian S."/>
            <person name="Sycamore N."/>
            <person name="Tracey A."/>
            <person name="Tromans A."/>
            <person name="Van Helmond Z."/>
            <person name="Wall M."/>
            <person name="Wallis J.M."/>
            <person name="White S."/>
            <person name="Whitehead S.L."/>
            <person name="Wilkinson J.E."/>
            <person name="Willey D.L."/>
            <person name="Williams H."/>
            <person name="Wilming L."/>
            <person name="Wray P.W."/>
            <person name="Wu Z."/>
            <person name="Coulson A."/>
            <person name="Vaudin M."/>
            <person name="Sulston J.E."/>
            <person name="Durbin R.M."/>
            <person name="Hubbard T."/>
            <person name="Wooster R."/>
            <person name="Dunham I."/>
            <person name="Carter N.P."/>
            <person name="McVean G."/>
            <person name="Ross M.T."/>
            <person name="Harrow J."/>
            <person name="Olson M.V."/>
            <person name="Beck S."/>
            <person name="Rogers J."/>
            <person name="Bentley D.R."/>
        </authorList>
    </citation>
    <scope>NUCLEOTIDE SEQUENCE [LARGE SCALE GENOMIC DNA]</scope>
</reference>
<reference key="2">
    <citation type="journal article" date="2004" name="Genome Res.">
        <title>The status, quality, and expansion of the NIH full-length cDNA project: the Mammalian Gene Collection (MGC).</title>
        <authorList>
            <consortium name="The MGC Project Team"/>
        </authorList>
    </citation>
    <scope>NUCLEOTIDE SEQUENCE [LARGE SCALE MRNA]</scope>
    <source>
        <tissue>Testis</tissue>
    </source>
</reference>
<proteinExistence type="evidence at protein level"/>
<comment type="interaction">
    <interactant intactId="EBI-18115868">
        <id>Q5T871</id>
    </interactant>
    <interactant intactId="EBI-1211484">
        <id>P05187</id>
        <label>ALPP</label>
    </interactant>
    <organismsDiffer>false</organismsDiffer>
    <experiments>3</experiments>
</comment>
<comment type="interaction">
    <interactant intactId="EBI-18115868">
        <id>Q5T871</id>
    </interactant>
    <interactant intactId="EBI-10192241">
        <id>O95833</id>
        <label>CLIC3</label>
    </interactant>
    <organismsDiffer>false</organismsDiffer>
    <experiments>3</experiments>
</comment>
<comment type="interaction">
    <interactant intactId="EBI-18115868">
        <id>Q5T871</id>
    </interactant>
    <interactant intactId="EBI-10172150">
        <id>P60370</id>
        <label>KRTAP10-5</label>
    </interactant>
    <organismsDiffer>false</organismsDiffer>
    <experiments>3</experiments>
</comment>
<comment type="interaction">
    <interactant intactId="EBI-18115868">
        <id>Q5T871</id>
    </interactant>
    <interactant intactId="EBI-10171774">
        <id>P60410</id>
        <label>KRTAP10-8</label>
    </interactant>
    <organismsDiffer>false</organismsDiffer>
    <experiments>3</experiments>
</comment>
<comment type="interaction">
    <interactant intactId="EBI-18115868">
        <id>Q5T871</id>
    </interactant>
    <interactant intactId="EBI-10302392">
        <id>Q9BYQ6</id>
        <label>KRTAP4-11</label>
    </interactant>
    <organismsDiffer>false</organismsDiffer>
    <experiments>3</experiments>
</comment>
<comment type="interaction">
    <interactant intactId="EBI-18115868">
        <id>Q5T871</id>
    </interactant>
    <interactant intactId="EBI-739863">
        <id>Q9BQ66</id>
        <label>KRTAP4-12</label>
    </interactant>
    <organismsDiffer>false</organismsDiffer>
    <experiments>3</experiments>
</comment>
<comment type="interaction">
    <interactant intactId="EBI-18115868">
        <id>Q5T871</id>
    </interactant>
    <interactant intactId="EBI-11993254">
        <id>Q9BYR2</id>
        <label>KRTAP4-5</label>
    </interactant>
    <organismsDiffer>false</organismsDiffer>
    <experiments>3</experiments>
</comment>
<comment type="interaction">
    <interactant intactId="EBI-18115868">
        <id>Q5T871</id>
    </interactant>
    <interactant intactId="EBI-11993296">
        <id>Q6L8G4</id>
        <label>KRTAP5-11</label>
    </interactant>
    <organismsDiffer>false</organismsDiffer>
    <experiments>3</experiments>
</comment>
<comment type="interaction">
    <interactant intactId="EBI-18115868">
        <id>Q5T871</id>
    </interactant>
    <interactant intactId="EBI-11958178">
        <id>Q701N4</id>
        <label>KRTAP5-2</label>
    </interactant>
    <organismsDiffer>false</organismsDiffer>
    <experiments>3</experiments>
</comment>
<comment type="interaction">
    <interactant intactId="EBI-18115868">
        <id>Q5T871</id>
    </interactant>
    <interactant intactId="EBI-11974251">
        <id>Q6L8H2</id>
        <label>KRTAP5-3</label>
    </interactant>
    <organismsDiffer>false</organismsDiffer>
    <experiments>3</experiments>
</comment>
<comment type="interaction">
    <interactant intactId="EBI-18115868">
        <id>Q5T871</id>
    </interactant>
    <interactant intactId="EBI-10250562">
        <id>Q6L8G9</id>
        <label>KRTAP5-6</label>
    </interactant>
    <organismsDiffer>false</organismsDiffer>
    <experiments>3</experiments>
</comment>
<comment type="interaction">
    <interactant intactId="EBI-18115868">
        <id>Q5T871</id>
    </interactant>
    <interactant intactId="EBI-3958099">
        <id>P26371</id>
        <label>KRTAP5-9</label>
    </interactant>
    <organismsDiffer>false</organismsDiffer>
    <experiments>3</experiments>
</comment>
<comment type="interaction">
    <interactant intactId="EBI-18115868">
        <id>Q5T871</id>
    </interactant>
    <interactant intactId="EBI-1044640">
        <id>Q9BYQ4</id>
        <label>KRTAP9-2</label>
    </interactant>
    <organismsDiffer>false</organismsDiffer>
    <experiments>3</experiments>
</comment>
<comment type="interaction">
    <interactant intactId="EBI-18115868">
        <id>Q5T871</id>
    </interactant>
    <interactant intactId="EBI-1051105">
        <id>Q92504</id>
        <label>SLC39A7</label>
    </interactant>
    <organismsDiffer>false</organismsDiffer>
    <experiments>3</experiments>
</comment>
<comment type="similarity">
    <text evidence="2">Belongs to the cornifin (SPRR) family.</text>
</comment>
<gene>
    <name type="primary">LELP1</name>
</gene>
<organism>
    <name type="scientific">Homo sapiens</name>
    <name type="common">Human</name>
    <dbReference type="NCBI Taxonomy" id="9606"/>
    <lineage>
        <taxon>Eukaryota</taxon>
        <taxon>Metazoa</taxon>
        <taxon>Chordata</taxon>
        <taxon>Craniata</taxon>
        <taxon>Vertebrata</taxon>
        <taxon>Euteleostomi</taxon>
        <taxon>Mammalia</taxon>
        <taxon>Eutheria</taxon>
        <taxon>Euarchontoglires</taxon>
        <taxon>Primates</taxon>
        <taxon>Haplorrhini</taxon>
        <taxon>Catarrhini</taxon>
        <taxon>Hominidae</taxon>
        <taxon>Homo</taxon>
    </lineage>
</organism>
<keyword id="KW-1267">Proteomics identification</keyword>
<keyword id="KW-1185">Reference proteome</keyword>